<comment type="function">
    <text evidence="1">Catalyzes the conversion of 3-deoxy-D-arabino-heptulosonate 7-phosphate (DAHP) to dehydroquinate (DHQ).</text>
</comment>
<comment type="catalytic activity">
    <reaction evidence="1">
        <text>7-phospho-2-dehydro-3-deoxy-D-arabino-heptonate = 3-dehydroquinate + phosphate</text>
        <dbReference type="Rhea" id="RHEA:21968"/>
        <dbReference type="ChEBI" id="CHEBI:32364"/>
        <dbReference type="ChEBI" id="CHEBI:43474"/>
        <dbReference type="ChEBI" id="CHEBI:58394"/>
        <dbReference type="EC" id="4.2.3.4"/>
    </reaction>
</comment>
<comment type="cofactor">
    <cofactor evidence="1">
        <name>NAD(+)</name>
        <dbReference type="ChEBI" id="CHEBI:57540"/>
    </cofactor>
</comment>
<comment type="cofactor">
    <cofactor evidence="1">
        <name>Co(2+)</name>
        <dbReference type="ChEBI" id="CHEBI:48828"/>
    </cofactor>
    <cofactor evidence="1">
        <name>Zn(2+)</name>
        <dbReference type="ChEBI" id="CHEBI:29105"/>
    </cofactor>
    <text evidence="1">Binds 1 divalent metal cation per subunit. Can use either Co(2+) or Zn(2+).</text>
</comment>
<comment type="pathway">
    <text evidence="1">Metabolic intermediate biosynthesis; chorismate biosynthesis; chorismate from D-erythrose 4-phosphate and phosphoenolpyruvate: step 2/7.</text>
</comment>
<comment type="subcellular location">
    <subcellularLocation>
        <location evidence="1">Cytoplasm</location>
    </subcellularLocation>
</comment>
<comment type="similarity">
    <text evidence="1">Belongs to the sugar phosphate cyclases superfamily. Dehydroquinate synthase family.</text>
</comment>
<proteinExistence type="inferred from homology"/>
<organism>
    <name type="scientific">Listeria innocua serovar 6a (strain ATCC BAA-680 / CLIP 11262)</name>
    <dbReference type="NCBI Taxonomy" id="272626"/>
    <lineage>
        <taxon>Bacteria</taxon>
        <taxon>Bacillati</taxon>
        <taxon>Bacillota</taxon>
        <taxon>Bacilli</taxon>
        <taxon>Bacillales</taxon>
        <taxon>Listeriaceae</taxon>
        <taxon>Listeria</taxon>
    </lineage>
</organism>
<feature type="chain" id="PRO_0000140752" description="3-dehydroquinate synthase">
    <location>
        <begin position="1"/>
        <end position="365"/>
    </location>
</feature>
<feature type="binding site" evidence="1">
    <location>
        <begin position="106"/>
        <end position="110"/>
    </location>
    <ligand>
        <name>NAD(+)</name>
        <dbReference type="ChEBI" id="CHEBI:57540"/>
    </ligand>
</feature>
<feature type="binding site" evidence="1">
    <location>
        <begin position="130"/>
        <end position="131"/>
    </location>
    <ligand>
        <name>NAD(+)</name>
        <dbReference type="ChEBI" id="CHEBI:57540"/>
    </ligand>
</feature>
<feature type="binding site" evidence="1">
    <location>
        <position position="142"/>
    </location>
    <ligand>
        <name>NAD(+)</name>
        <dbReference type="ChEBI" id="CHEBI:57540"/>
    </ligand>
</feature>
<feature type="binding site" evidence="1">
    <location>
        <position position="151"/>
    </location>
    <ligand>
        <name>NAD(+)</name>
        <dbReference type="ChEBI" id="CHEBI:57540"/>
    </ligand>
</feature>
<feature type="binding site" evidence="1">
    <location>
        <begin position="169"/>
        <end position="172"/>
    </location>
    <ligand>
        <name>NAD(+)</name>
        <dbReference type="ChEBI" id="CHEBI:57540"/>
    </ligand>
</feature>
<feature type="binding site" evidence="1">
    <location>
        <position position="184"/>
    </location>
    <ligand>
        <name>Zn(2+)</name>
        <dbReference type="ChEBI" id="CHEBI:29105"/>
    </ligand>
</feature>
<feature type="binding site" evidence="1">
    <location>
        <position position="247"/>
    </location>
    <ligand>
        <name>Zn(2+)</name>
        <dbReference type="ChEBI" id="CHEBI:29105"/>
    </ligand>
</feature>
<feature type="binding site" evidence="1">
    <location>
        <position position="264"/>
    </location>
    <ligand>
        <name>Zn(2+)</name>
        <dbReference type="ChEBI" id="CHEBI:29105"/>
    </ligand>
</feature>
<evidence type="ECO:0000255" key="1">
    <source>
        <dbReference type="HAMAP-Rule" id="MF_00110"/>
    </source>
</evidence>
<protein>
    <recommendedName>
        <fullName evidence="1">3-dehydroquinate synthase</fullName>
        <shortName evidence="1">DHQS</shortName>
        <ecNumber evidence="1">4.2.3.4</ecNumber>
    </recommendedName>
</protein>
<sequence length="365" mass="41052">MPEITVRAKSKTYPVYINEFALTDVKEQWTKSLAKYSHVFVLTDEHVANLHKAKLDAVLADLPVVTYYVAPNGEEAKTFRVYEDVMTKMIETGLDRKAVLIAFGGGVIGDLGGFVAATYMRGIPFYQVPTTVLAHDSAVGGKVAINHPLGKNMIGNFYQPEAVIYDTQFFATLPEREMRSGFAEMIKHALISDHALLTALMDTFTEPKDFYTKDLTPFLQRGIEIKANIVAQDETEQGVRAYLNFGHTFGHALEAYGNFGKWLHGEAITYGMIYALTMSETVYGLDFDLAKFTTWLERLGYNTTFDVTVPFSNILDNMRHDKKTTFNEISMVLLEDIGKPVIFKAEDELIFDTYKSVMRNGGDLF</sequence>
<name>AROB_LISIN</name>
<gene>
    <name evidence="1" type="primary">aroB</name>
    <name type="ordered locus">lin2041</name>
</gene>
<keyword id="KW-0028">Amino-acid biosynthesis</keyword>
<keyword id="KW-0057">Aromatic amino acid biosynthesis</keyword>
<keyword id="KW-0170">Cobalt</keyword>
<keyword id="KW-0963">Cytoplasm</keyword>
<keyword id="KW-0456">Lyase</keyword>
<keyword id="KW-0479">Metal-binding</keyword>
<keyword id="KW-0520">NAD</keyword>
<keyword id="KW-0547">Nucleotide-binding</keyword>
<keyword id="KW-0862">Zinc</keyword>
<reference key="1">
    <citation type="journal article" date="2001" name="Science">
        <title>Comparative genomics of Listeria species.</title>
        <authorList>
            <person name="Glaser P."/>
            <person name="Frangeul L."/>
            <person name="Buchrieser C."/>
            <person name="Rusniok C."/>
            <person name="Amend A."/>
            <person name="Baquero F."/>
            <person name="Berche P."/>
            <person name="Bloecker H."/>
            <person name="Brandt P."/>
            <person name="Chakraborty T."/>
            <person name="Charbit A."/>
            <person name="Chetouani F."/>
            <person name="Couve E."/>
            <person name="de Daruvar A."/>
            <person name="Dehoux P."/>
            <person name="Domann E."/>
            <person name="Dominguez-Bernal G."/>
            <person name="Duchaud E."/>
            <person name="Durant L."/>
            <person name="Dussurget O."/>
            <person name="Entian K.-D."/>
            <person name="Fsihi H."/>
            <person name="Garcia-del Portillo F."/>
            <person name="Garrido P."/>
            <person name="Gautier L."/>
            <person name="Goebel W."/>
            <person name="Gomez-Lopez N."/>
            <person name="Hain T."/>
            <person name="Hauf J."/>
            <person name="Jackson D."/>
            <person name="Jones L.-M."/>
            <person name="Kaerst U."/>
            <person name="Kreft J."/>
            <person name="Kuhn M."/>
            <person name="Kunst F."/>
            <person name="Kurapkat G."/>
            <person name="Madueno E."/>
            <person name="Maitournam A."/>
            <person name="Mata Vicente J."/>
            <person name="Ng E."/>
            <person name="Nedjari H."/>
            <person name="Nordsiek G."/>
            <person name="Novella S."/>
            <person name="de Pablos B."/>
            <person name="Perez-Diaz J.-C."/>
            <person name="Purcell R."/>
            <person name="Remmel B."/>
            <person name="Rose M."/>
            <person name="Schlueter T."/>
            <person name="Simoes N."/>
            <person name="Tierrez A."/>
            <person name="Vazquez-Boland J.-A."/>
            <person name="Voss H."/>
            <person name="Wehland J."/>
            <person name="Cossart P."/>
        </authorList>
    </citation>
    <scope>NUCLEOTIDE SEQUENCE [LARGE SCALE GENOMIC DNA]</scope>
    <source>
        <strain>ATCC BAA-680 / CLIP 11262</strain>
    </source>
</reference>
<dbReference type="EC" id="4.2.3.4" evidence="1"/>
<dbReference type="EMBL" id="AL596170">
    <property type="protein sequence ID" value="CAC97271.1"/>
    <property type="molecule type" value="Genomic_DNA"/>
</dbReference>
<dbReference type="PIR" id="AG1687">
    <property type="entry name" value="AG1687"/>
</dbReference>
<dbReference type="RefSeq" id="WP_010991722.1">
    <property type="nucleotide sequence ID" value="NC_003212.1"/>
</dbReference>
<dbReference type="SMR" id="Q92A81"/>
<dbReference type="STRING" id="272626.gene:17566399"/>
<dbReference type="KEGG" id="lin:aroB"/>
<dbReference type="eggNOG" id="COG0337">
    <property type="taxonomic scope" value="Bacteria"/>
</dbReference>
<dbReference type="HOGENOM" id="CLU_001201_0_1_9"/>
<dbReference type="OrthoDB" id="9806583at2"/>
<dbReference type="UniPathway" id="UPA00053">
    <property type="reaction ID" value="UER00085"/>
</dbReference>
<dbReference type="Proteomes" id="UP000002513">
    <property type="component" value="Chromosome"/>
</dbReference>
<dbReference type="GO" id="GO:0005737">
    <property type="term" value="C:cytoplasm"/>
    <property type="evidence" value="ECO:0007669"/>
    <property type="project" value="UniProtKB-SubCell"/>
</dbReference>
<dbReference type="GO" id="GO:0003856">
    <property type="term" value="F:3-dehydroquinate synthase activity"/>
    <property type="evidence" value="ECO:0007669"/>
    <property type="project" value="UniProtKB-UniRule"/>
</dbReference>
<dbReference type="GO" id="GO:0046872">
    <property type="term" value="F:metal ion binding"/>
    <property type="evidence" value="ECO:0007669"/>
    <property type="project" value="UniProtKB-KW"/>
</dbReference>
<dbReference type="GO" id="GO:0000166">
    <property type="term" value="F:nucleotide binding"/>
    <property type="evidence" value="ECO:0007669"/>
    <property type="project" value="UniProtKB-KW"/>
</dbReference>
<dbReference type="GO" id="GO:0008652">
    <property type="term" value="P:amino acid biosynthetic process"/>
    <property type="evidence" value="ECO:0007669"/>
    <property type="project" value="UniProtKB-KW"/>
</dbReference>
<dbReference type="GO" id="GO:0009073">
    <property type="term" value="P:aromatic amino acid family biosynthetic process"/>
    <property type="evidence" value="ECO:0007669"/>
    <property type="project" value="UniProtKB-KW"/>
</dbReference>
<dbReference type="GO" id="GO:0009423">
    <property type="term" value="P:chorismate biosynthetic process"/>
    <property type="evidence" value="ECO:0007669"/>
    <property type="project" value="UniProtKB-UniRule"/>
</dbReference>
<dbReference type="CDD" id="cd08195">
    <property type="entry name" value="DHQS"/>
    <property type="match status" value="1"/>
</dbReference>
<dbReference type="FunFam" id="3.40.50.1970:FF:000026">
    <property type="entry name" value="3-dehydroquinate synthase"/>
    <property type="match status" value="1"/>
</dbReference>
<dbReference type="Gene3D" id="3.40.50.1970">
    <property type="match status" value="1"/>
</dbReference>
<dbReference type="Gene3D" id="1.20.1090.10">
    <property type="entry name" value="Dehydroquinate synthase-like - alpha domain"/>
    <property type="match status" value="1"/>
</dbReference>
<dbReference type="HAMAP" id="MF_00110">
    <property type="entry name" value="DHQ_synthase"/>
    <property type="match status" value="1"/>
</dbReference>
<dbReference type="InterPro" id="IPR050071">
    <property type="entry name" value="Dehydroquinate_synthase"/>
</dbReference>
<dbReference type="InterPro" id="IPR016037">
    <property type="entry name" value="DHQ_synth_AroB"/>
</dbReference>
<dbReference type="InterPro" id="IPR030963">
    <property type="entry name" value="DHQ_synth_fam"/>
</dbReference>
<dbReference type="InterPro" id="IPR030960">
    <property type="entry name" value="DHQS/DOIS_N"/>
</dbReference>
<dbReference type="InterPro" id="IPR056179">
    <property type="entry name" value="DHQS_C"/>
</dbReference>
<dbReference type="NCBIfam" id="TIGR01357">
    <property type="entry name" value="aroB"/>
    <property type="match status" value="1"/>
</dbReference>
<dbReference type="PANTHER" id="PTHR43622">
    <property type="entry name" value="3-DEHYDROQUINATE SYNTHASE"/>
    <property type="match status" value="1"/>
</dbReference>
<dbReference type="PANTHER" id="PTHR43622:SF7">
    <property type="entry name" value="3-DEHYDROQUINATE SYNTHASE, CHLOROPLASTIC"/>
    <property type="match status" value="1"/>
</dbReference>
<dbReference type="Pfam" id="PF01761">
    <property type="entry name" value="DHQ_synthase"/>
    <property type="match status" value="1"/>
</dbReference>
<dbReference type="Pfam" id="PF24621">
    <property type="entry name" value="DHQS_C"/>
    <property type="match status" value="1"/>
</dbReference>
<dbReference type="PIRSF" id="PIRSF001455">
    <property type="entry name" value="DHQ_synth"/>
    <property type="match status" value="1"/>
</dbReference>
<dbReference type="SUPFAM" id="SSF56796">
    <property type="entry name" value="Dehydroquinate synthase-like"/>
    <property type="match status" value="1"/>
</dbReference>
<accession>Q92A81</accession>